<proteinExistence type="evidence at protein level"/>
<evidence type="ECO:0000255" key="1">
    <source>
        <dbReference type="PROSITE-ProRule" id="PRU00055"/>
    </source>
</evidence>
<evidence type="ECO:0000256" key="2">
    <source>
        <dbReference type="SAM" id="MobiDB-lite"/>
    </source>
</evidence>
<evidence type="ECO:0000269" key="3">
    <source>
    </source>
</evidence>
<evidence type="ECO:0000269" key="4">
    <source>
    </source>
</evidence>
<evidence type="ECO:0000269" key="5">
    <source>
    </source>
</evidence>
<evidence type="ECO:0000305" key="6"/>
<evidence type="ECO:0007744" key="7">
    <source>
    </source>
</evidence>
<accession>P35192</accession>
<accession>D6VZJ5</accession>
<accession>E9P8Z5</accession>
<gene>
    <name type="primary">MAC1</name>
    <name type="synonym">CUA1</name>
    <name type="ordered locus">YMR021C</name>
    <name type="ORF">YM9711.11C</name>
</gene>
<dbReference type="EMBL" id="X74551">
    <property type="protein sequence ID" value="CAA52645.1"/>
    <property type="molecule type" value="Genomic_DNA"/>
</dbReference>
<dbReference type="EMBL" id="Z49211">
    <property type="protein sequence ID" value="CAA89124.1"/>
    <property type="molecule type" value="Genomic_DNA"/>
</dbReference>
<dbReference type="EMBL" id="AY692934">
    <property type="protein sequence ID" value="AAT92953.1"/>
    <property type="molecule type" value="Genomic_DNA"/>
</dbReference>
<dbReference type="EMBL" id="BK006946">
    <property type="protein sequence ID" value="DAA09919.1"/>
    <property type="molecule type" value="Genomic_DNA"/>
</dbReference>
<dbReference type="PIR" id="S54023">
    <property type="entry name" value="S54023"/>
</dbReference>
<dbReference type="RefSeq" id="NP_013734.1">
    <property type="nucleotide sequence ID" value="NM_001182517.1"/>
</dbReference>
<dbReference type="SMR" id="P35192"/>
<dbReference type="BioGRID" id="35192">
    <property type="interactions" value="288"/>
</dbReference>
<dbReference type="DIP" id="DIP-4851N"/>
<dbReference type="FunCoup" id="P35192">
    <property type="interactions" value="755"/>
</dbReference>
<dbReference type="IntAct" id="P35192">
    <property type="interactions" value="7"/>
</dbReference>
<dbReference type="STRING" id="4932.YMR021C"/>
<dbReference type="iPTMnet" id="P35192"/>
<dbReference type="PaxDb" id="4932-YMR021C"/>
<dbReference type="PeptideAtlas" id="P35192"/>
<dbReference type="EnsemblFungi" id="YMR021C_mRNA">
    <property type="protein sequence ID" value="YMR021C"/>
    <property type="gene ID" value="YMR021C"/>
</dbReference>
<dbReference type="GeneID" id="855035"/>
<dbReference type="KEGG" id="sce:YMR021C"/>
<dbReference type="AGR" id="SGD:S000004623"/>
<dbReference type="SGD" id="S000004623">
    <property type="gene designation" value="MAC1"/>
</dbReference>
<dbReference type="VEuPathDB" id="FungiDB:YMR021C"/>
<dbReference type="eggNOG" id="ENOG502QQ0T">
    <property type="taxonomic scope" value="Eukaryota"/>
</dbReference>
<dbReference type="HOGENOM" id="CLU_034774_0_0_1"/>
<dbReference type="InParanoid" id="P35192"/>
<dbReference type="OMA" id="CLIHRKE"/>
<dbReference type="OrthoDB" id="5600085at2759"/>
<dbReference type="BioCyc" id="YEAST:G3O-32726-MONOMER"/>
<dbReference type="BioGRID-ORCS" id="855035">
    <property type="hits" value="1 hit in 10 CRISPR screens"/>
</dbReference>
<dbReference type="PRO" id="PR:P35192"/>
<dbReference type="Proteomes" id="UP000002311">
    <property type="component" value="Chromosome XIII"/>
</dbReference>
<dbReference type="RNAct" id="P35192">
    <property type="molecule type" value="protein"/>
</dbReference>
<dbReference type="GO" id="GO:0005634">
    <property type="term" value="C:nucleus"/>
    <property type="evidence" value="ECO:0000314"/>
    <property type="project" value="SGD"/>
</dbReference>
<dbReference type="GO" id="GO:0000987">
    <property type="term" value="F:cis-regulatory region sequence-specific DNA binding"/>
    <property type="evidence" value="ECO:0000314"/>
    <property type="project" value="SGD"/>
</dbReference>
<dbReference type="GO" id="GO:0005507">
    <property type="term" value="F:copper ion binding"/>
    <property type="evidence" value="ECO:0000318"/>
    <property type="project" value="GO_Central"/>
</dbReference>
<dbReference type="GO" id="GO:0001228">
    <property type="term" value="F:DNA-binding transcription activator activity, RNA polymerase II-specific"/>
    <property type="evidence" value="ECO:0000315"/>
    <property type="project" value="SGD"/>
</dbReference>
<dbReference type="GO" id="GO:0000981">
    <property type="term" value="F:DNA-binding transcription factor activity, RNA polymerase II-specific"/>
    <property type="evidence" value="ECO:0000318"/>
    <property type="project" value="GO_Central"/>
</dbReference>
<dbReference type="GO" id="GO:0000978">
    <property type="term" value="F:RNA polymerase II cis-regulatory region sequence-specific DNA binding"/>
    <property type="evidence" value="ECO:0000318"/>
    <property type="project" value="GO_Central"/>
</dbReference>
<dbReference type="GO" id="GO:0006878">
    <property type="term" value="P:intracellular copper ion homeostasis"/>
    <property type="evidence" value="ECO:0000315"/>
    <property type="project" value="SGD"/>
</dbReference>
<dbReference type="GO" id="GO:0006879">
    <property type="term" value="P:intracellular iron ion homeostasis"/>
    <property type="evidence" value="ECO:0000318"/>
    <property type="project" value="GO_Central"/>
</dbReference>
<dbReference type="GO" id="GO:0045732">
    <property type="term" value="P:positive regulation of protein catabolic process"/>
    <property type="evidence" value="ECO:0000315"/>
    <property type="project" value="SGD"/>
</dbReference>
<dbReference type="GO" id="GO:0045944">
    <property type="term" value="P:positive regulation of transcription by RNA polymerase II"/>
    <property type="evidence" value="ECO:0000314"/>
    <property type="project" value="SGD"/>
</dbReference>
<dbReference type="FunFam" id="3.90.430.10:FF:000001">
    <property type="entry name" value="Copper fist DNA-binding protein"/>
    <property type="match status" value="1"/>
</dbReference>
<dbReference type="Gene3D" id="3.90.430.10">
    <property type="entry name" value="Copper fist DNA-binding domain"/>
    <property type="match status" value="1"/>
</dbReference>
<dbReference type="InterPro" id="IPR051763">
    <property type="entry name" value="Copper_Homeo_Regul"/>
</dbReference>
<dbReference type="InterPro" id="IPR001083">
    <property type="entry name" value="Cu_fist_DNA-bd_dom"/>
</dbReference>
<dbReference type="InterPro" id="IPR036395">
    <property type="entry name" value="Cu_fist_DNA-bd_dom_sf"/>
</dbReference>
<dbReference type="PANTHER" id="PTHR28088:SF7">
    <property type="entry name" value="METAL-BINDING ACTIVATOR 1"/>
    <property type="match status" value="1"/>
</dbReference>
<dbReference type="PANTHER" id="PTHR28088">
    <property type="entry name" value="TRANSCRIPTIONAL ACTIVATOR HAA1-RELATED"/>
    <property type="match status" value="1"/>
</dbReference>
<dbReference type="Pfam" id="PF00649">
    <property type="entry name" value="Copper-fist"/>
    <property type="match status" value="1"/>
</dbReference>
<dbReference type="PRINTS" id="PR00617">
    <property type="entry name" value="COPPERFIST"/>
</dbReference>
<dbReference type="SMART" id="SM01090">
    <property type="entry name" value="Copper-fist"/>
    <property type="match status" value="1"/>
</dbReference>
<dbReference type="SMART" id="SM00412">
    <property type="entry name" value="Cu_FIST"/>
    <property type="match status" value="1"/>
</dbReference>
<dbReference type="SUPFAM" id="SSF57879">
    <property type="entry name" value="Zinc domain conserved in yeast copper-regulated transcription factors"/>
    <property type="match status" value="1"/>
</dbReference>
<dbReference type="PROSITE" id="PS01119">
    <property type="entry name" value="COPPER_FIST_1"/>
    <property type="match status" value="1"/>
</dbReference>
<dbReference type="PROSITE" id="PS50073">
    <property type="entry name" value="COPPER_FIST_2"/>
    <property type="match status" value="1"/>
</dbReference>
<sequence>MIIFNGNKYACASCIRGHRSSTCRHSHRMLIKVRTRGRPSPMAIRDAILVDSTSQSTEYENGAQIEGDCCSAMNQQPILFVRASAVRKARMINGKLHILMEEGFTAHEPKDISTFTDDGNKYITETEFLRKHSPKAPATGTISPDSTKSSSSSEKKERSRLQQEPIRHFSNCCKKDKSQNPASNGKTNKAPSDDIFTPYGSLESTSAFNDILQENYNSSVPGAHDSSETLTPQSTTTIAAPHSSDVASKVEVLTHKGIFLSTQCSCEDESCPCVNCLIHRSEEELNSYIQQSGVPLTNIGEAQITDKMMDYLDDCKCTDKECICPPDNCTCDGCFSHSTNIIPFEKFFFYGILNARLTRKTQIKFKGKLVPSKYWWDFLKLQVPLMTDAQLELLDIHAWFQKLVSNYAPHLSDATTS</sequence>
<comment type="function">
    <text evidence="3">Regulatory protein involved in Cu/Fe utilization and stress resistance. Involved in basal level transcription of FRE1 and H(2)O(2)-induced transcription of CTT1. Regulates the transcription of CTR1 and CTR3 via the copper ion responsive elements in their promoters. Required for degradation of CTR1.</text>
</comment>
<comment type="subcellular location">
    <subcellularLocation>
        <location>Nucleus</location>
    </subcellularLocation>
</comment>
<comment type="miscellaneous">
    <text evidence="4">Present with 14800 molecules/cell in log phase SD medium.</text>
</comment>
<feature type="chain" id="PRO_0000194928" description="Metal-binding activator 1">
    <location>
        <begin position="1"/>
        <end position="417"/>
    </location>
</feature>
<feature type="repeat" description="1">
    <location>
        <begin position="264"/>
        <end position="279"/>
    </location>
</feature>
<feature type="repeat" description="2">
    <location>
        <begin position="322"/>
        <end position="337"/>
    </location>
</feature>
<feature type="DNA-binding region" description="Copper-fist" evidence="1">
    <location>
        <begin position="1"/>
        <end position="40"/>
    </location>
</feature>
<feature type="region of interest" description="Disordered" evidence="2">
    <location>
        <begin position="128"/>
        <end position="198"/>
    </location>
</feature>
<feature type="region of interest" description="Disordered" evidence="2">
    <location>
        <begin position="216"/>
        <end position="242"/>
    </location>
</feature>
<feature type="region of interest" description="2 X 16 AA repeat of C-X-C-X(4)-C-X-C-X-X-C-X-X-H">
    <location>
        <begin position="264"/>
        <end position="337"/>
    </location>
</feature>
<feature type="compositionally biased region" description="Basic and acidic residues" evidence="2">
    <location>
        <begin position="153"/>
        <end position="178"/>
    </location>
</feature>
<feature type="compositionally biased region" description="Polar residues" evidence="2">
    <location>
        <begin position="179"/>
        <end position="190"/>
    </location>
</feature>
<feature type="compositionally biased region" description="Polar residues" evidence="2">
    <location>
        <begin position="228"/>
        <end position="238"/>
    </location>
</feature>
<feature type="binding site" evidence="1">
    <location>
        <position position="11"/>
    </location>
    <ligand>
        <name>Zn(2+)</name>
        <dbReference type="ChEBI" id="CHEBI:29105"/>
    </ligand>
</feature>
<feature type="binding site" evidence="1">
    <location>
        <position position="14"/>
    </location>
    <ligand>
        <name>Zn(2+)</name>
        <dbReference type="ChEBI" id="CHEBI:29105"/>
    </ligand>
</feature>
<feature type="binding site" evidence="1">
    <location>
        <position position="23"/>
    </location>
    <ligand>
        <name>Zn(2+)</name>
        <dbReference type="ChEBI" id="CHEBI:29105"/>
    </ligand>
</feature>
<feature type="binding site" evidence="1">
    <location>
        <position position="25"/>
    </location>
    <ligand>
        <name>Zn(2+)</name>
        <dbReference type="ChEBI" id="CHEBI:29105"/>
    </ligand>
</feature>
<feature type="modified residue" description="Phosphoserine" evidence="7">
    <location>
        <position position="143"/>
    </location>
</feature>
<feature type="mutagenesis site" description="Gain of function." evidence="5">
    <original>H</original>
    <variation>Q</variation>
    <location>
        <position position="279"/>
    </location>
</feature>
<feature type="sequence conflict" description="In Ref. 1; CAA52645." evidence="6" ref="1">
    <original>P</original>
    <variation>A</variation>
    <location>
        <position position="198"/>
    </location>
</feature>
<feature type="sequence conflict" description="In Ref. 4; AAT92953." evidence="6" ref="4">
    <original>K</original>
    <variation>R</variation>
    <location>
        <position position="380"/>
    </location>
</feature>
<reference key="1">
    <citation type="journal article" date="1993" name="EMBO J.">
        <title>MAC1, a nuclear regulatory protein related to Cu-dependent transcription factors is involved in Cu/Fe utilization and stress resistance in yeast.</title>
        <authorList>
            <person name="Jungmann J."/>
            <person name="Reins H.-A."/>
            <person name="Lee J."/>
            <person name="Romeo A."/>
            <person name="Hassett R."/>
            <person name="Kosman D."/>
            <person name="Jentsch S."/>
        </authorList>
    </citation>
    <scope>NUCLEOTIDE SEQUENCE [GENOMIC DNA]</scope>
    <scope>MUTAGENESIS</scope>
</reference>
<reference key="2">
    <citation type="journal article" date="1997" name="Nature">
        <title>The nucleotide sequence of Saccharomyces cerevisiae chromosome XIII.</title>
        <authorList>
            <person name="Bowman S."/>
            <person name="Churcher C.M."/>
            <person name="Badcock K."/>
            <person name="Brown D."/>
            <person name="Chillingworth T."/>
            <person name="Connor R."/>
            <person name="Dedman K."/>
            <person name="Devlin K."/>
            <person name="Gentles S."/>
            <person name="Hamlin N."/>
            <person name="Hunt S."/>
            <person name="Jagels K."/>
            <person name="Lye G."/>
            <person name="Moule S."/>
            <person name="Odell C."/>
            <person name="Pearson D."/>
            <person name="Rajandream M.A."/>
            <person name="Rice P."/>
            <person name="Skelton J."/>
            <person name="Walsh S.V."/>
            <person name="Whitehead S."/>
            <person name="Barrell B.G."/>
        </authorList>
    </citation>
    <scope>NUCLEOTIDE SEQUENCE [LARGE SCALE GENOMIC DNA]</scope>
    <source>
        <strain>ATCC 204508 / S288c</strain>
    </source>
</reference>
<reference key="3">
    <citation type="journal article" date="2014" name="G3 (Bethesda)">
        <title>The reference genome sequence of Saccharomyces cerevisiae: Then and now.</title>
        <authorList>
            <person name="Engel S.R."/>
            <person name="Dietrich F.S."/>
            <person name="Fisk D.G."/>
            <person name="Binkley G."/>
            <person name="Balakrishnan R."/>
            <person name="Costanzo M.C."/>
            <person name="Dwight S.S."/>
            <person name="Hitz B.C."/>
            <person name="Karra K."/>
            <person name="Nash R.S."/>
            <person name="Weng S."/>
            <person name="Wong E.D."/>
            <person name="Lloyd P."/>
            <person name="Skrzypek M.S."/>
            <person name="Miyasato S.R."/>
            <person name="Simison M."/>
            <person name="Cherry J.M."/>
        </authorList>
    </citation>
    <scope>GENOME REANNOTATION</scope>
    <source>
        <strain>ATCC 204508 / S288c</strain>
    </source>
</reference>
<reference key="4">
    <citation type="journal article" date="2007" name="Genome Res.">
        <title>Approaching a complete repository of sequence-verified protein-encoding clones for Saccharomyces cerevisiae.</title>
        <authorList>
            <person name="Hu Y."/>
            <person name="Rolfs A."/>
            <person name="Bhullar B."/>
            <person name="Murthy T.V.S."/>
            <person name="Zhu C."/>
            <person name="Berger M.F."/>
            <person name="Camargo A.A."/>
            <person name="Kelley F."/>
            <person name="McCarron S."/>
            <person name="Jepson D."/>
            <person name="Richardson A."/>
            <person name="Raphael J."/>
            <person name="Moreira D."/>
            <person name="Taycher E."/>
            <person name="Zuo D."/>
            <person name="Mohr S."/>
            <person name="Kane M.F."/>
            <person name="Williamson J."/>
            <person name="Simpson A.J.G."/>
            <person name="Bulyk M.L."/>
            <person name="Harlow E."/>
            <person name="Marsischky G."/>
            <person name="Kolodner R.D."/>
            <person name="LaBaer J."/>
        </authorList>
    </citation>
    <scope>NUCLEOTIDE SEQUENCE [GENOMIC DNA]</scope>
    <source>
        <strain>ATCC 204508 / S288c</strain>
    </source>
</reference>
<reference key="5">
    <citation type="journal article" date="2002" name="J. Biol. Chem.">
        <title>Copper ion-sensing transcription factor Mac1p post-translationally controls the degradation of its target gene product Ctr1p.</title>
        <authorList>
            <person name="Yonkovich J."/>
            <person name="McKenndry R."/>
            <person name="Shi X."/>
            <person name="Zhu Z."/>
        </authorList>
    </citation>
    <scope>FUNCTION</scope>
</reference>
<reference key="6">
    <citation type="journal article" date="2001" name="J. Biol. Chem.">
        <title>Phosphorylation and Cu+ coordination-dependent DNA binding of the transcription factor Mac1p in the regulation of copper transport.</title>
        <authorList>
            <person name="Heredia J."/>
            <person name="Crooks M."/>
            <person name="Zhu Z."/>
        </authorList>
    </citation>
    <scope>PHOSPHORYLATION</scope>
</reference>
<reference key="7">
    <citation type="journal article" date="2003" name="Nature">
        <title>Global analysis of protein expression in yeast.</title>
        <authorList>
            <person name="Ghaemmaghami S."/>
            <person name="Huh W.-K."/>
            <person name="Bower K."/>
            <person name="Howson R.W."/>
            <person name="Belle A."/>
            <person name="Dephoure N."/>
            <person name="O'Shea E.K."/>
            <person name="Weissman J.S."/>
        </authorList>
    </citation>
    <scope>LEVEL OF PROTEIN EXPRESSION [LARGE SCALE ANALYSIS]</scope>
</reference>
<reference key="8">
    <citation type="journal article" date="2008" name="Mol. Cell. Proteomics">
        <title>A multidimensional chromatography technology for in-depth phosphoproteome analysis.</title>
        <authorList>
            <person name="Albuquerque C.P."/>
            <person name="Smolka M.B."/>
            <person name="Payne S.H."/>
            <person name="Bafna V."/>
            <person name="Eng J."/>
            <person name="Zhou H."/>
        </authorList>
    </citation>
    <scope>PHOSPHORYLATION [LARGE SCALE ANALYSIS] AT SER-143</scope>
    <scope>IDENTIFICATION BY MASS SPECTROMETRY [LARGE SCALE ANALYSIS]</scope>
</reference>
<name>MAC1_YEAST</name>
<protein>
    <recommendedName>
        <fullName>Metal-binding activator 1</fullName>
    </recommendedName>
</protein>
<keyword id="KW-0010">Activator</keyword>
<keyword id="KW-0186">Copper</keyword>
<keyword id="KW-0238">DNA-binding</keyword>
<keyword id="KW-0479">Metal-binding</keyword>
<keyword id="KW-0539">Nucleus</keyword>
<keyword id="KW-0597">Phosphoprotein</keyword>
<keyword id="KW-1185">Reference proteome</keyword>
<keyword id="KW-0677">Repeat</keyword>
<keyword id="KW-0804">Transcription</keyword>
<keyword id="KW-0805">Transcription regulation</keyword>
<keyword id="KW-0862">Zinc</keyword>
<organism>
    <name type="scientific">Saccharomyces cerevisiae (strain ATCC 204508 / S288c)</name>
    <name type="common">Baker's yeast</name>
    <dbReference type="NCBI Taxonomy" id="559292"/>
    <lineage>
        <taxon>Eukaryota</taxon>
        <taxon>Fungi</taxon>
        <taxon>Dikarya</taxon>
        <taxon>Ascomycota</taxon>
        <taxon>Saccharomycotina</taxon>
        <taxon>Saccharomycetes</taxon>
        <taxon>Saccharomycetales</taxon>
        <taxon>Saccharomycetaceae</taxon>
        <taxon>Saccharomyces</taxon>
    </lineage>
</organism>